<gene>
    <name evidence="1" type="primary">gpmA</name>
    <name type="ordered locus">LACR_0382</name>
</gene>
<organism>
    <name type="scientific">Lactococcus lactis subsp. cremoris (strain SK11)</name>
    <dbReference type="NCBI Taxonomy" id="272622"/>
    <lineage>
        <taxon>Bacteria</taxon>
        <taxon>Bacillati</taxon>
        <taxon>Bacillota</taxon>
        <taxon>Bacilli</taxon>
        <taxon>Lactobacillales</taxon>
        <taxon>Streptococcaceae</taxon>
        <taxon>Lactococcus</taxon>
        <taxon>Lactococcus cremoris subsp. cremoris</taxon>
    </lineage>
</organism>
<reference key="1">
    <citation type="journal article" date="2006" name="Proc. Natl. Acad. Sci. U.S.A.">
        <title>Comparative genomics of the lactic acid bacteria.</title>
        <authorList>
            <person name="Makarova K.S."/>
            <person name="Slesarev A."/>
            <person name="Wolf Y.I."/>
            <person name="Sorokin A."/>
            <person name="Mirkin B."/>
            <person name="Koonin E.V."/>
            <person name="Pavlov A."/>
            <person name="Pavlova N."/>
            <person name="Karamychev V."/>
            <person name="Polouchine N."/>
            <person name="Shakhova V."/>
            <person name="Grigoriev I."/>
            <person name="Lou Y."/>
            <person name="Rohksar D."/>
            <person name="Lucas S."/>
            <person name="Huang K."/>
            <person name="Goodstein D.M."/>
            <person name="Hawkins T."/>
            <person name="Plengvidhya V."/>
            <person name="Welker D."/>
            <person name="Hughes J."/>
            <person name="Goh Y."/>
            <person name="Benson A."/>
            <person name="Baldwin K."/>
            <person name="Lee J.-H."/>
            <person name="Diaz-Muniz I."/>
            <person name="Dosti B."/>
            <person name="Smeianov V."/>
            <person name="Wechter W."/>
            <person name="Barabote R."/>
            <person name="Lorca G."/>
            <person name="Altermann E."/>
            <person name="Barrangou R."/>
            <person name="Ganesan B."/>
            <person name="Xie Y."/>
            <person name="Rawsthorne H."/>
            <person name="Tamir D."/>
            <person name="Parker C."/>
            <person name="Breidt F."/>
            <person name="Broadbent J.R."/>
            <person name="Hutkins R."/>
            <person name="O'Sullivan D."/>
            <person name="Steele J."/>
            <person name="Unlu G."/>
            <person name="Saier M.H. Jr."/>
            <person name="Klaenhammer T."/>
            <person name="Richardson P."/>
            <person name="Kozyavkin S."/>
            <person name="Weimer B.C."/>
            <person name="Mills D.A."/>
        </authorList>
    </citation>
    <scope>NUCLEOTIDE SEQUENCE [LARGE SCALE GENOMIC DNA]</scope>
    <source>
        <strain>SK11</strain>
    </source>
</reference>
<proteinExistence type="inferred from homology"/>
<keyword id="KW-0312">Gluconeogenesis</keyword>
<keyword id="KW-0324">Glycolysis</keyword>
<keyword id="KW-0413">Isomerase</keyword>
<name>GPMA_LACLS</name>
<sequence>MPKLVFARHGESEWNLANLFTGWADVDLSENGTKQAIEAGKLIKEAGIEFDIAYTSVLKRAIKTTNLALEFSDQLWVPVVKSWRLNERHYGGLTGLNKADAAAKHGDEQVHIWRRSYDVLPPAMDHDDKYTAHGDRRYAGLEDSLIPDAENLKVTLERALPFWEDQIAPALKEGKNVFVGAHGNSIRALVKQIKKLSDDEIMDVEIPNFPPLVFEFDDNLNVQNEYYLAPKKA</sequence>
<accession>Q031Y3</accession>
<dbReference type="EC" id="5.4.2.11" evidence="1"/>
<dbReference type="EMBL" id="CP000425">
    <property type="protein sequence ID" value="ABJ71989.1"/>
    <property type="molecule type" value="Genomic_DNA"/>
</dbReference>
<dbReference type="RefSeq" id="WP_011675395.1">
    <property type="nucleotide sequence ID" value="NC_008527.1"/>
</dbReference>
<dbReference type="SMR" id="Q031Y3"/>
<dbReference type="KEGG" id="llc:LACR_0382"/>
<dbReference type="HOGENOM" id="CLU_033323_1_5_9"/>
<dbReference type="UniPathway" id="UPA00109">
    <property type="reaction ID" value="UER00186"/>
</dbReference>
<dbReference type="Proteomes" id="UP000000240">
    <property type="component" value="Chromosome"/>
</dbReference>
<dbReference type="GO" id="GO:0004619">
    <property type="term" value="F:phosphoglycerate mutase activity"/>
    <property type="evidence" value="ECO:0007669"/>
    <property type="project" value="UniProtKB-EC"/>
</dbReference>
<dbReference type="GO" id="GO:0006094">
    <property type="term" value="P:gluconeogenesis"/>
    <property type="evidence" value="ECO:0007669"/>
    <property type="project" value="UniProtKB-UniRule"/>
</dbReference>
<dbReference type="GO" id="GO:0006096">
    <property type="term" value="P:glycolytic process"/>
    <property type="evidence" value="ECO:0007669"/>
    <property type="project" value="UniProtKB-UniRule"/>
</dbReference>
<dbReference type="CDD" id="cd07067">
    <property type="entry name" value="HP_PGM_like"/>
    <property type="match status" value="1"/>
</dbReference>
<dbReference type="FunFam" id="3.40.50.1240:FF:000003">
    <property type="entry name" value="2,3-bisphosphoglycerate-dependent phosphoglycerate mutase"/>
    <property type="match status" value="1"/>
</dbReference>
<dbReference type="Gene3D" id="3.40.50.1240">
    <property type="entry name" value="Phosphoglycerate mutase-like"/>
    <property type="match status" value="1"/>
</dbReference>
<dbReference type="HAMAP" id="MF_01039">
    <property type="entry name" value="PGAM_GpmA"/>
    <property type="match status" value="1"/>
</dbReference>
<dbReference type="InterPro" id="IPR013078">
    <property type="entry name" value="His_Pase_superF_clade-1"/>
</dbReference>
<dbReference type="InterPro" id="IPR029033">
    <property type="entry name" value="His_PPase_superfam"/>
</dbReference>
<dbReference type="InterPro" id="IPR005952">
    <property type="entry name" value="Phosphogly_mut1"/>
</dbReference>
<dbReference type="NCBIfam" id="TIGR01258">
    <property type="entry name" value="pgm_1"/>
    <property type="match status" value="1"/>
</dbReference>
<dbReference type="NCBIfam" id="NF010713">
    <property type="entry name" value="PRK14115.1"/>
    <property type="match status" value="1"/>
</dbReference>
<dbReference type="NCBIfam" id="NF010715">
    <property type="entry name" value="PRK14117.1"/>
    <property type="match status" value="1"/>
</dbReference>
<dbReference type="PANTHER" id="PTHR11931">
    <property type="entry name" value="PHOSPHOGLYCERATE MUTASE"/>
    <property type="match status" value="1"/>
</dbReference>
<dbReference type="Pfam" id="PF00300">
    <property type="entry name" value="His_Phos_1"/>
    <property type="match status" value="1"/>
</dbReference>
<dbReference type="PIRSF" id="PIRSF000709">
    <property type="entry name" value="6PFK_2-Ptase"/>
    <property type="match status" value="1"/>
</dbReference>
<dbReference type="SMART" id="SM00855">
    <property type="entry name" value="PGAM"/>
    <property type="match status" value="1"/>
</dbReference>
<dbReference type="SUPFAM" id="SSF53254">
    <property type="entry name" value="Phosphoglycerate mutase-like"/>
    <property type="match status" value="1"/>
</dbReference>
<protein>
    <recommendedName>
        <fullName evidence="1">2,3-bisphosphoglycerate-dependent phosphoglycerate mutase</fullName>
        <shortName evidence="1">BPG-dependent PGAM</shortName>
        <shortName evidence="1">PGAM</shortName>
        <shortName evidence="1">Phosphoglyceromutase</shortName>
        <shortName evidence="1">dPGM</shortName>
        <ecNumber evidence="1">5.4.2.11</ecNumber>
    </recommendedName>
</protein>
<feature type="chain" id="PRO_1000064069" description="2,3-bisphosphoglycerate-dependent phosphoglycerate mutase">
    <location>
        <begin position="1"/>
        <end position="233"/>
    </location>
</feature>
<feature type="active site" description="Tele-phosphohistidine intermediate" evidence="1">
    <location>
        <position position="9"/>
    </location>
</feature>
<feature type="active site" description="Proton donor/acceptor" evidence="1">
    <location>
        <position position="87"/>
    </location>
</feature>
<feature type="binding site" evidence="1">
    <location>
        <begin position="8"/>
        <end position="15"/>
    </location>
    <ligand>
        <name>substrate</name>
    </ligand>
</feature>
<feature type="binding site" evidence="1">
    <location>
        <begin position="21"/>
        <end position="22"/>
    </location>
    <ligand>
        <name>substrate</name>
    </ligand>
</feature>
<feature type="binding site" evidence="1">
    <location>
        <position position="60"/>
    </location>
    <ligand>
        <name>substrate</name>
    </ligand>
</feature>
<feature type="binding site" evidence="1">
    <location>
        <begin position="87"/>
        <end position="90"/>
    </location>
    <ligand>
        <name>substrate</name>
    </ligand>
</feature>
<feature type="binding site" evidence="1">
    <location>
        <position position="98"/>
    </location>
    <ligand>
        <name>substrate</name>
    </ligand>
</feature>
<feature type="binding site" evidence="1">
    <location>
        <begin position="114"/>
        <end position="115"/>
    </location>
    <ligand>
        <name>substrate</name>
    </ligand>
</feature>
<feature type="binding site" evidence="1">
    <location>
        <begin position="183"/>
        <end position="184"/>
    </location>
    <ligand>
        <name>substrate</name>
    </ligand>
</feature>
<feature type="site" description="Transition state stabilizer" evidence="1">
    <location>
        <position position="182"/>
    </location>
</feature>
<comment type="function">
    <text evidence="1">Catalyzes the interconversion of 2-phosphoglycerate and 3-phosphoglycerate.</text>
</comment>
<comment type="catalytic activity">
    <reaction evidence="1">
        <text>(2R)-2-phosphoglycerate = (2R)-3-phosphoglycerate</text>
        <dbReference type="Rhea" id="RHEA:15901"/>
        <dbReference type="ChEBI" id="CHEBI:58272"/>
        <dbReference type="ChEBI" id="CHEBI:58289"/>
        <dbReference type="EC" id="5.4.2.11"/>
    </reaction>
</comment>
<comment type="pathway">
    <text evidence="1">Carbohydrate degradation; glycolysis; pyruvate from D-glyceraldehyde 3-phosphate: step 3/5.</text>
</comment>
<comment type="similarity">
    <text evidence="1">Belongs to the phosphoglycerate mutase family. BPG-dependent PGAM subfamily.</text>
</comment>
<evidence type="ECO:0000255" key="1">
    <source>
        <dbReference type="HAMAP-Rule" id="MF_01039"/>
    </source>
</evidence>